<name>NU1C_TRIEI</name>
<sequence length="372" mass="40780">MNSGIDLQRTFIQALVDLGLSSEIAKTLWLPFPMLLMIVVATVGVLVTVWLERKISAAAQQRIGPEFMGPLGTLAPLADGLKLLFKEDVVPAKADPLLFTLGPVIVAVPVFLSYLVVPFGQNLVITDLGVAIFLWIALSSIQPIGLLMSGYASNNKYSLLGGLRAAAQSISYEIPLALAVLAVAMMSNSLSTIDIVEQQSSYGILGWNIWRQPLGFIIFWIAVLAECERLPFDLPEAEEELVAGYQTEYTGMKFALYYLASYVNLVLSSLLVAVLYLGGWESPLPVELISNWFGVSETTPWLQITNATLGIIMTLLKTYLLVFIAVLLRWTLPRVRIDQLLDLGWKFLLPVALVNLLLTAALKLTFPFAFGG</sequence>
<keyword id="KW-0472">Membrane</keyword>
<keyword id="KW-0520">NAD</keyword>
<keyword id="KW-0521">NADP</keyword>
<keyword id="KW-0618">Plastoquinone</keyword>
<keyword id="KW-0874">Quinone</keyword>
<keyword id="KW-0793">Thylakoid</keyword>
<keyword id="KW-1278">Translocase</keyword>
<keyword id="KW-0812">Transmembrane</keyword>
<keyword id="KW-1133">Transmembrane helix</keyword>
<dbReference type="EC" id="7.1.1.-" evidence="1"/>
<dbReference type="EMBL" id="CP000393">
    <property type="protein sequence ID" value="ABG50859.1"/>
    <property type="molecule type" value="Genomic_DNA"/>
</dbReference>
<dbReference type="RefSeq" id="WP_011611235.1">
    <property type="nucleotide sequence ID" value="NC_008312.1"/>
</dbReference>
<dbReference type="SMR" id="Q115G5"/>
<dbReference type="STRING" id="203124.Tery_1579"/>
<dbReference type="KEGG" id="ter:Tery_1579"/>
<dbReference type="eggNOG" id="COG1005">
    <property type="taxonomic scope" value="Bacteria"/>
</dbReference>
<dbReference type="HOGENOM" id="CLU_015134_0_1_3"/>
<dbReference type="OrthoDB" id="9803734at2"/>
<dbReference type="GO" id="GO:0031676">
    <property type="term" value="C:plasma membrane-derived thylakoid membrane"/>
    <property type="evidence" value="ECO:0007669"/>
    <property type="project" value="UniProtKB-SubCell"/>
</dbReference>
<dbReference type="GO" id="GO:0003954">
    <property type="term" value="F:NADH dehydrogenase activity"/>
    <property type="evidence" value="ECO:0007669"/>
    <property type="project" value="TreeGrafter"/>
</dbReference>
<dbReference type="GO" id="GO:0016655">
    <property type="term" value="F:oxidoreductase activity, acting on NAD(P)H, quinone or similar compound as acceptor"/>
    <property type="evidence" value="ECO:0007669"/>
    <property type="project" value="UniProtKB-UniRule"/>
</dbReference>
<dbReference type="GO" id="GO:0048038">
    <property type="term" value="F:quinone binding"/>
    <property type="evidence" value="ECO:0007669"/>
    <property type="project" value="UniProtKB-KW"/>
</dbReference>
<dbReference type="GO" id="GO:0009060">
    <property type="term" value="P:aerobic respiration"/>
    <property type="evidence" value="ECO:0007669"/>
    <property type="project" value="TreeGrafter"/>
</dbReference>
<dbReference type="GO" id="GO:0019684">
    <property type="term" value="P:photosynthesis, light reaction"/>
    <property type="evidence" value="ECO:0007669"/>
    <property type="project" value="UniProtKB-UniRule"/>
</dbReference>
<dbReference type="HAMAP" id="MF_01350">
    <property type="entry name" value="NDH1_NuoH"/>
    <property type="match status" value="1"/>
</dbReference>
<dbReference type="InterPro" id="IPR001694">
    <property type="entry name" value="NADH_UbQ_OxRdtase_su1/FPO"/>
</dbReference>
<dbReference type="InterPro" id="IPR018086">
    <property type="entry name" value="NADH_UbQ_OxRdtase_su1_CS"/>
</dbReference>
<dbReference type="NCBIfam" id="NF004741">
    <property type="entry name" value="PRK06076.1-2"/>
    <property type="match status" value="1"/>
</dbReference>
<dbReference type="NCBIfam" id="NF004744">
    <property type="entry name" value="PRK06076.1-5"/>
    <property type="match status" value="1"/>
</dbReference>
<dbReference type="PANTHER" id="PTHR11432">
    <property type="entry name" value="NADH DEHYDROGENASE SUBUNIT 1"/>
    <property type="match status" value="1"/>
</dbReference>
<dbReference type="PANTHER" id="PTHR11432:SF3">
    <property type="entry name" value="NADH-UBIQUINONE OXIDOREDUCTASE CHAIN 1"/>
    <property type="match status" value="1"/>
</dbReference>
<dbReference type="Pfam" id="PF00146">
    <property type="entry name" value="NADHdh"/>
    <property type="match status" value="1"/>
</dbReference>
<dbReference type="PROSITE" id="PS00667">
    <property type="entry name" value="COMPLEX1_ND1_1"/>
    <property type="match status" value="1"/>
</dbReference>
<dbReference type="PROSITE" id="PS00668">
    <property type="entry name" value="COMPLEX1_ND1_2"/>
    <property type="match status" value="1"/>
</dbReference>
<evidence type="ECO:0000255" key="1">
    <source>
        <dbReference type="HAMAP-Rule" id="MF_01350"/>
    </source>
</evidence>
<accession>Q115G5</accession>
<organism>
    <name type="scientific">Trichodesmium erythraeum (strain IMS101)</name>
    <dbReference type="NCBI Taxonomy" id="203124"/>
    <lineage>
        <taxon>Bacteria</taxon>
        <taxon>Bacillati</taxon>
        <taxon>Cyanobacteriota</taxon>
        <taxon>Cyanophyceae</taxon>
        <taxon>Oscillatoriophycideae</taxon>
        <taxon>Oscillatoriales</taxon>
        <taxon>Microcoleaceae</taxon>
        <taxon>Trichodesmium</taxon>
    </lineage>
</organism>
<comment type="function">
    <text evidence="1">NDH-1 shuttles electrons from an unknown electron donor, via FMN and iron-sulfur (Fe-S) centers, to quinones in the respiratory and/or the photosynthetic chain. The immediate electron acceptor for the enzyme in this species is believed to be plastoquinone. Couples the redox reaction to proton translocation, and thus conserves the redox energy in a proton gradient.</text>
</comment>
<comment type="catalytic activity">
    <reaction evidence="1">
        <text>a plastoquinone + NADH + (n+1) H(+)(in) = a plastoquinol + NAD(+) + n H(+)(out)</text>
        <dbReference type="Rhea" id="RHEA:42608"/>
        <dbReference type="Rhea" id="RHEA-COMP:9561"/>
        <dbReference type="Rhea" id="RHEA-COMP:9562"/>
        <dbReference type="ChEBI" id="CHEBI:15378"/>
        <dbReference type="ChEBI" id="CHEBI:17757"/>
        <dbReference type="ChEBI" id="CHEBI:57540"/>
        <dbReference type="ChEBI" id="CHEBI:57945"/>
        <dbReference type="ChEBI" id="CHEBI:62192"/>
    </reaction>
</comment>
<comment type="catalytic activity">
    <reaction evidence="1">
        <text>a plastoquinone + NADPH + (n+1) H(+)(in) = a plastoquinol + NADP(+) + n H(+)(out)</text>
        <dbReference type="Rhea" id="RHEA:42612"/>
        <dbReference type="Rhea" id="RHEA-COMP:9561"/>
        <dbReference type="Rhea" id="RHEA-COMP:9562"/>
        <dbReference type="ChEBI" id="CHEBI:15378"/>
        <dbReference type="ChEBI" id="CHEBI:17757"/>
        <dbReference type="ChEBI" id="CHEBI:57783"/>
        <dbReference type="ChEBI" id="CHEBI:58349"/>
        <dbReference type="ChEBI" id="CHEBI:62192"/>
    </reaction>
</comment>
<comment type="subunit">
    <text evidence="1">NDH-1 is composed of at least 11 different subunits.</text>
</comment>
<comment type="subcellular location">
    <subcellularLocation>
        <location evidence="1">Cellular thylakoid membrane</location>
        <topology evidence="1">Multi-pass membrane protein</topology>
    </subcellularLocation>
</comment>
<comment type="similarity">
    <text evidence="1">Belongs to the complex I subunit 1 family.</text>
</comment>
<gene>
    <name evidence="1" type="primary">ndhA</name>
    <name type="ordered locus">Tery_1579</name>
</gene>
<feature type="chain" id="PRO_0000298855" description="NAD(P)H-quinone oxidoreductase subunit 1">
    <location>
        <begin position="1"/>
        <end position="372"/>
    </location>
</feature>
<feature type="transmembrane region" description="Helical" evidence="1">
    <location>
        <begin position="29"/>
        <end position="49"/>
    </location>
</feature>
<feature type="transmembrane region" description="Helical" evidence="1">
    <location>
        <begin position="97"/>
        <end position="117"/>
    </location>
</feature>
<feature type="transmembrane region" description="Helical" evidence="1">
    <location>
        <begin position="128"/>
        <end position="148"/>
    </location>
</feature>
<feature type="transmembrane region" description="Helical" evidence="1">
    <location>
        <begin position="176"/>
        <end position="196"/>
    </location>
</feature>
<feature type="transmembrane region" description="Helical" evidence="1">
    <location>
        <begin position="204"/>
        <end position="224"/>
    </location>
</feature>
<feature type="transmembrane region" description="Helical" evidence="1">
    <location>
        <begin position="254"/>
        <end position="274"/>
    </location>
</feature>
<feature type="transmembrane region" description="Helical" evidence="1">
    <location>
        <begin position="308"/>
        <end position="328"/>
    </location>
</feature>
<feature type="transmembrane region" description="Helical" evidence="1">
    <location>
        <begin position="351"/>
        <end position="371"/>
    </location>
</feature>
<protein>
    <recommendedName>
        <fullName evidence="1">NAD(P)H-quinone oxidoreductase subunit 1</fullName>
        <ecNumber evidence="1">7.1.1.-</ecNumber>
    </recommendedName>
    <alternativeName>
        <fullName evidence="1">NAD(P)H dehydrogenase I subunit 1</fullName>
    </alternativeName>
    <alternativeName>
        <fullName evidence="1">NDH-1 subunit 1</fullName>
    </alternativeName>
    <alternativeName>
        <fullName evidence="1">NDH-A</fullName>
    </alternativeName>
</protein>
<reference key="1">
    <citation type="journal article" date="2015" name="Proc. Natl. Acad. Sci. U.S.A.">
        <title>Trichodesmium genome maintains abundant, widespread noncoding DNA in situ, despite oligotrophic lifestyle.</title>
        <authorList>
            <person name="Walworth N."/>
            <person name="Pfreundt U."/>
            <person name="Nelson W.C."/>
            <person name="Mincer T."/>
            <person name="Heidelberg J.F."/>
            <person name="Fu F."/>
            <person name="Waterbury J.B."/>
            <person name="Glavina del Rio T."/>
            <person name="Goodwin L."/>
            <person name="Kyrpides N.C."/>
            <person name="Land M.L."/>
            <person name="Woyke T."/>
            <person name="Hutchins D.A."/>
            <person name="Hess W.R."/>
            <person name="Webb E.A."/>
        </authorList>
    </citation>
    <scope>NUCLEOTIDE SEQUENCE [LARGE SCALE GENOMIC DNA]</scope>
    <source>
        <strain>IMS101</strain>
    </source>
</reference>
<proteinExistence type="inferred from homology"/>